<organism>
    <name type="scientific">Drosophila melanogaster</name>
    <name type="common">Fruit fly</name>
    <dbReference type="NCBI Taxonomy" id="7227"/>
    <lineage>
        <taxon>Eukaryota</taxon>
        <taxon>Metazoa</taxon>
        <taxon>Ecdysozoa</taxon>
        <taxon>Arthropoda</taxon>
        <taxon>Hexapoda</taxon>
        <taxon>Insecta</taxon>
        <taxon>Pterygota</taxon>
        <taxon>Neoptera</taxon>
        <taxon>Endopterygota</taxon>
        <taxon>Diptera</taxon>
        <taxon>Brachycera</taxon>
        <taxon>Muscomorpha</taxon>
        <taxon>Ephydroidea</taxon>
        <taxon>Drosophilidae</taxon>
        <taxon>Drosophila</taxon>
        <taxon>Sophophora</taxon>
    </lineage>
</organism>
<feature type="chain" id="PRO_0000228060" description="Mitochondrial import inner membrane translocase subunit Tim10">
    <location>
        <begin position="1"/>
        <end position="92"/>
    </location>
</feature>
<feature type="short sequence motif" description="Twin CX3C motif">
    <location>
        <begin position="36"/>
        <end position="61"/>
    </location>
</feature>
<feature type="disulfide bond" evidence="1">
    <location>
        <begin position="36"/>
        <end position="61"/>
    </location>
</feature>
<feature type="disulfide bond" evidence="1">
    <location>
        <begin position="40"/>
        <end position="57"/>
    </location>
</feature>
<feature type="sequence conflict" description="In Ref. 1; AAD39998." evidence="2" ref="1">
    <original>S</original>
    <variation>F</variation>
    <location>
        <position position="80"/>
    </location>
</feature>
<name>TIM10_DROME</name>
<reference key="1">
    <citation type="journal article" date="1999" name="FEBS Lett.">
        <title>The mitochondrial TIM22 preprotein translocase is highly conserved throughout the eukaryotic kingdom.</title>
        <authorList>
            <person name="Bauer M.F."/>
            <person name="Rothbauer U."/>
            <person name="Muehlenbein N."/>
            <person name="Smith R.J.H."/>
            <person name="Gerbitz K.-D."/>
            <person name="Neupert W."/>
            <person name="Brunner M."/>
            <person name="Hofmann S."/>
        </authorList>
    </citation>
    <scope>NUCLEOTIDE SEQUENCE [MRNA]</scope>
</reference>
<reference key="2">
    <citation type="journal article" date="2000" name="Science">
        <title>The genome sequence of Drosophila melanogaster.</title>
        <authorList>
            <person name="Adams M.D."/>
            <person name="Celniker S.E."/>
            <person name="Holt R.A."/>
            <person name="Evans C.A."/>
            <person name="Gocayne J.D."/>
            <person name="Amanatides P.G."/>
            <person name="Scherer S.E."/>
            <person name="Li P.W."/>
            <person name="Hoskins R.A."/>
            <person name="Galle R.F."/>
            <person name="George R.A."/>
            <person name="Lewis S.E."/>
            <person name="Richards S."/>
            <person name="Ashburner M."/>
            <person name="Henderson S.N."/>
            <person name="Sutton G.G."/>
            <person name="Wortman J.R."/>
            <person name="Yandell M.D."/>
            <person name="Zhang Q."/>
            <person name="Chen L.X."/>
            <person name="Brandon R.C."/>
            <person name="Rogers Y.-H.C."/>
            <person name="Blazej R.G."/>
            <person name="Champe M."/>
            <person name="Pfeiffer B.D."/>
            <person name="Wan K.H."/>
            <person name="Doyle C."/>
            <person name="Baxter E.G."/>
            <person name="Helt G."/>
            <person name="Nelson C.R."/>
            <person name="Miklos G.L.G."/>
            <person name="Abril J.F."/>
            <person name="Agbayani A."/>
            <person name="An H.-J."/>
            <person name="Andrews-Pfannkoch C."/>
            <person name="Baldwin D."/>
            <person name="Ballew R.M."/>
            <person name="Basu A."/>
            <person name="Baxendale J."/>
            <person name="Bayraktaroglu L."/>
            <person name="Beasley E.M."/>
            <person name="Beeson K.Y."/>
            <person name="Benos P.V."/>
            <person name="Berman B.P."/>
            <person name="Bhandari D."/>
            <person name="Bolshakov S."/>
            <person name="Borkova D."/>
            <person name="Botchan M.R."/>
            <person name="Bouck J."/>
            <person name="Brokstein P."/>
            <person name="Brottier P."/>
            <person name="Burtis K.C."/>
            <person name="Busam D.A."/>
            <person name="Butler H."/>
            <person name="Cadieu E."/>
            <person name="Center A."/>
            <person name="Chandra I."/>
            <person name="Cherry J.M."/>
            <person name="Cawley S."/>
            <person name="Dahlke C."/>
            <person name="Davenport L.B."/>
            <person name="Davies P."/>
            <person name="de Pablos B."/>
            <person name="Delcher A."/>
            <person name="Deng Z."/>
            <person name="Mays A.D."/>
            <person name="Dew I."/>
            <person name="Dietz S.M."/>
            <person name="Dodson K."/>
            <person name="Doup L.E."/>
            <person name="Downes M."/>
            <person name="Dugan-Rocha S."/>
            <person name="Dunkov B.C."/>
            <person name="Dunn P."/>
            <person name="Durbin K.J."/>
            <person name="Evangelista C.C."/>
            <person name="Ferraz C."/>
            <person name="Ferriera S."/>
            <person name="Fleischmann W."/>
            <person name="Fosler C."/>
            <person name="Gabrielian A.E."/>
            <person name="Garg N.S."/>
            <person name="Gelbart W.M."/>
            <person name="Glasser K."/>
            <person name="Glodek A."/>
            <person name="Gong F."/>
            <person name="Gorrell J.H."/>
            <person name="Gu Z."/>
            <person name="Guan P."/>
            <person name="Harris M."/>
            <person name="Harris N.L."/>
            <person name="Harvey D.A."/>
            <person name="Heiman T.J."/>
            <person name="Hernandez J.R."/>
            <person name="Houck J."/>
            <person name="Hostin D."/>
            <person name="Houston K.A."/>
            <person name="Howland T.J."/>
            <person name="Wei M.-H."/>
            <person name="Ibegwam C."/>
            <person name="Jalali M."/>
            <person name="Kalush F."/>
            <person name="Karpen G.H."/>
            <person name="Ke Z."/>
            <person name="Kennison J.A."/>
            <person name="Ketchum K.A."/>
            <person name="Kimmel B.E."/>
            <person name="Kodira C.D."/>
            <person name="Kraft C.L."/>
            <person name="Kravitz S."/>
            <person name="Kulp D."/>
            <person name="Lai Z."/>
            <person name="Lasko P."/>
            <person name="Lei Y."/>
            <person name="Levitsky A.A."/>
            <person name="Li J.H."/>
            <person name="Li Z."/>
            <person name="Liang Y."/>
            <person name="Lin X."/>
            <person name="Liu X."/>
            <person name="Mattei B."/>
            <person name="McIntosh T.C."/>
            <person name="McLeod M.P."/>
            <person name="McPherson D."/>
            <person name="Merkulov G."/>
            <person name="Milshina N.V."/>
            <person name="Mobarry C."/>
            <person name="Morris J."/>
            <person name="Moshrefi A."/>
            <person name="Mount S.M."/>
            <person name="Moy M."/>
            <person name="Murphy B."/>
            <person name="Murphy L."/>
            <person name="Muzny D.M."/>
            <person name="Nelson D.L."/>
            <person name="Nelson D.R."/>
            <person name="Nelson K.A."/>
            <person name="Nixon K."/>
            <person name="Nusskern D.R."/>
            <person name="Pacleb J.M."/>
            <person name="Palazzolo M."/>
            <person name="Pittman G.S."/>
            <person name="Pan S."/>
            <person name="Pollard J."/>
            <person name="Puri V."/>
            <person name="Reese M.G."/>
            <person name="Reinert K."/>
            <person name="Remington K."/>
            <person name="Saunders R.D.C."/>
            <person name="Scheeler F."/>
            <person name="Shen H."/>
            <person name="Shue B.C."/>
            <person name="Siden-Kiamos I."/>
            <person name="Simpson M."/>
            <person name="Skupski M.P."/>
            <person name="Smith T.J."/>
            <person name="Spier E."/>
            <person name="Spradling A.C."/>
            <person name="Stapleton M."/>
            <person name="Strong R."/>
            <person name="Sun E."/>
            <person name="Svirskas R."/>
            <person name="Tector C."/>
            <person name="Turner R."/>
            <person name="Venter E."/>
            <person name="Wang A.H."/>
            <person name="Wang X."/>
            <person name="Wang Z.-Y."/>
            <person name="Wassarman D.A."/>
            <person name="Weinstock G.M."/>
            <person name="Weissenbach J."/>
            <person name="Williams S.M."/>
            <person name="Woodage T."/>
            <person name="Worley K.C."/>
            <person name="Wu D."/>
            <person name="Yang S."/>
            <person name="Yao Q.A."/>
            <person name="Ye J."/>
            <person name="Yeh R.-F."/>
            <person name="Zaveri J.S."/>
            <person name="Zhan M."/>
            <person name="Zhang G."/>
            <person name="Zhao Q."/>
            <person name="Zheng L."/>
            <person name="Zheng X.H."/>
            <person name="Zhong F.N."/>
            <person name="Zhong W."/>
            <person name="Zhou X."/>
            <person name="Zhu S.C."/>
            <person name="Zhu X."/>
            <person name="Smith H.O."/>
            <person name="Gibbs R.A."/>
            <person name="Myers E.W."/>
            <person name="Rubin G.M."/>
            <person name="Venter J.C."/>
        </authorList>
    </citation>
    <scope>NUCLEOTIDE SEQUENCE [LARGE SCALE GENOMIC DNA]</scope>
    <source>
        <strain>Berkeley</strain>
    </source>
</reference>
<reference key="3">
    <citation type="journal article" date="2002" name="Genome Biol.">
        <title>Annotation of the Drosophila melanogaster euchromatic genome: a systematic review.</title>
        <authorList>
            <person name="Misra S."/>
            <person name="Crosby M.A."/>
            <person name="Mungall C.J."/>
            <person name="Matthews B.B."/>
            <person name="Campbell K.S."/>
            <person name="Hradecky P."/>
            <person name="Huang Y."/>
            <person name="Kaminker J.S."/>
            <person name="Millburn G.H."/>
            <person name="Prochnik S.E."/>
            <person name="Smith C.D."/>
            <person name="Tupy J.L."/>
            <person name="Whitfield E.J."/>
            <person name="Bayraktaroglu L."/>
            <person name="Berman B.P."/>
            <person name="Bettencourt B.R."/>
            <person name="Celniker S.E."/>
            <person name="de Grey A.D.N.J."/>
            <person name="Drysdale R.A."/>
            <person name="Harris N.L."/>
            <person name="Richter J."/>
            <person name="Russo S."/>
            <person name="Schroeder A.J."/>
            <person name="Shu S.Q."/>
            <person name="Stapleton M."/>
            <person name="Yamada C."/>
            <person name="Ashburner M."/>
            <person name="Gelbart W.M."/>
            <person name="Rubin G.M."/>
            <person name="Lewis S.E."/>
        </authorList>
    </citation>
    <scope>GENOME REANNOTATION</scope>
    <source>
        <strain>Berkeley</strain>
    </source>
</reference>
<reference key="4">
    <citation type="journal article" date="2002" name="Genome Biol.">
        <title>A Drosophila full-length cDNA resource.</title>
        <authorList>
            <person name="Stapleton M."/>
            <person name="Carlson J.W."/>
            <person name="Brokstein P."/>
            <person name="Yu C."/>
            <person name="Champe M."/>
            <person name="George R.A."/>
            <person name="Guarin H."/>
            <person name="Kronmiller B."/>
            <person name="Pacleb J.M."/>
            <person name="Park S."/>
            <person name="Wan K.H."/>
            <person name="Rubin G.M."/>
            <person name="Celniker S.E."/>
        </authorList>
    </citation>
    <scope>NUCLEOTIDE SEQUENCE [LARGE SCALE MRNA]</scope>
    <source>
        <strain>Berkeley</strain>
        <tissue>Embryo</tissue>
    </source>
</reference>
<dbReference type="EMBL" id="AF150092">
    <property type="protein sequence ID" value="AAD39998.1"/>
    <property type="molecule type" value="mRNA"/>
</dbReference>
<dbReference type="EMBL" id="AE013599">
    <property type="protein sequence ID" value="AAF46756.1"/>
    <property type="molecule type" value="Genomic_DNA"/>
</dbReference>
<dbReference type="EMBL" id="AE013599">
    <property type="protein sequence ID" value="AAM70932.1"/>
    <property type="molecule type" value="Genomic_DNA"/>
</dbReference>
<dbReference type="EMBL" id="AY061513">
    <property type="protein sequence ID" value="AAL29061.1"/>
    <property type="molecule type" value="mRNA"/>
</dbReference>
<dbReference type="RefSeq" id="NP_611606.1">
    <property type="nucleotide sequence ID" value="NM_137762.4"/>
</dbReference>
<dbReference type="RefSeq" id="NP_726104.1">
    <property type="nucleotide sequence ID" value="NM_166474.3"/>
</dbReference>
<dbReference type="SMR" id="Q9W2D6"/>
<dbReference type="BioGRID" id="63103">
    <property type="interactions" value="12"/>
</dbReference>
<dbReference type="FunCoup" id="Q9W2D6">
    <property type="interactions" value="1611"/>
</dbReference>
<dbReference type="IntAct" id="Q9W2D6">
    <property type="interactions" value="6"/>
</dbReference>
<dbReference type="STRING" id="7227.FBpp0071594"/>
<dbReference type="PaxDb" id="7227-FBpp0071593"/>
<dbReference type="DNASU" id="37478"/>
<dbReference type="EnsemblMetazoa" id="FBtr0071676">
    <property type="protein sequence ID" value="FBpp0071593"/>
    <property type="gene ID" value="FBgn0027360"/>
</dbReference>
<dbReference type="EnsemblMetazoa" id="FBtr0071677">
    <property type="protein sequence ID" value="FBpp0071594"/>
    <property type="gene ID" value="FBgn0027360"/>
</dbReference>
<dbReference type="GeneID" id="37478"/>
<dbReference type="KEGG" id="dme:Dmel_CG9878"/>
<dbReference type="UCSC" id="CG9878-RA">
    <property type="organism name" value="d. melanogaster"/>
</dbReference>
<dbReference type="AGR" id="FB:FBgn0027360"/>
<dbReference type="CTD" id="37478"/>
<dbReference type="FlyBase" id="FBgn0027360">
    <property type="gene designation" value="Tim10"/>
</dbReference>
<dbReference type="VEuPathDB" id="VectorBase:FBgn0027360"/>
<dbReference type="eggNOG" id="KOG3480">
    <property type="taxonomic scope" value="Eukaryota"/>
</dbReference>
<dbReference type="GeneTree" id="ENSGT00390000003068"/>
<dbReference type="HOGENOM" id="CLU_162151_2_0_1"/>
<dbReference type="InParanoid" id="Q9W2D6"/>
<dbReference type="OMA" id="ESCYSKC"/>
<dbReference type="OrthoDB" id="274922at2759"/>
<dbReference type="PhylomeDB" id="Q9W2D6"/>
<dbReference type="Reactome" id="R-DME-1268020">
    <property type="pathway name" value="Mitochondrial protein import"/>
</dbReference>
<dbReference type="BioGRID-ORCS" id="37478">
    <property type="hits" value="1 hit in 1 CRISPR screen"/>
</dbReference>
<dbReference type="ChiTaRS" id="Tim10">
    <property type="organism name" value="fly"/>
</dbReference>
<dbReference type="GenomeRNAi" id="37478"/>
<dbReference type="PRO" id="PR:Q9W2D6"/>
<dbReference type="Proteomes" id="UP000000803">
    <property type="component" value="Chromosome 2R"/>
</dbReference>
<dbReference type="Bgee" id="FBgn0027360">
    <property type="expression patterns" value="Expressed in anterior midgut primordium (Drosophila) and 18 other cell types or tissues"/>
</dbReference>
<dbReference type="ExpressionAtlas" id="Q9W2D6">
    <property type="expression patterns" value="baseline"/>
</dbReference>
<dbReference type="GO" id="GO:0005743">
    <property type="term" value="C:mitochondrial inner membrane"/>
    <property type="evidence" value="ECO:0000318"/>
    <property type="project" value="GO_Central"/>
</dbReference>
<dbReference type="GO" id="GO:0042719">
    <property type="term" value="C:mitochondrial intermembrane space protein transporter complex"/>
    <property type="evidence" value="ECO:0000250"/>
    <property type="project" value="UniProtKB"/>
</dbReference>
<dbReference type="GO" id="GO:0042721">
    <property type="term" value="C:TIM22 mitochondrial import inner membrane insertion complex"/>
    <property type="evidence" value="ECO:0000250"/>
    <property type="project" value="FlyBase"/>
</dbReference>
<dbReference type="GO" id="GO:0046872">
    <property type="term" value="F:metal ion binding"/>
    <property type="evidence" value="ECO:0007669"/>
    <property type="project" value="UniProtKB-KW"/>
</dbReference>
<dbReference type="GO" id="GO:0050829">
    <property type="term" value="P:defense response to Gram-negative bacterium"/>
    <property type="evidence" value="ECO:0007001"/>
    <property type="project" value="FlyBase"/>
</dbReference>
<dbReference type="GO" id="GO:0045824">
    <property type="term" value="P:negative regulation of innate immune response"/>
    <property type="evidence" value="ECO:0007001"/>
    <property type="project" value="FlyBase"/>
</dbReference>
<dbReference type="GO" id="GO:0045039">
    <property type="term" value="P:protein insertion into mitochondrial inner membrane"/>
    <property type="evidence" value="ECO:0000250"/>
    <property type="project" value="UniProtKB"/>
</dbReference>
<dbReference type="FunFam" id="1.10.287.810:FF:000002">
    <property type="entry name" value="Mitochondrial import inner membrane translocase subunit tim10"/>
    <property type="match status" value="1"/>
</dbReference>
<dbReference type="Gene3D" id="1.10.287.810">
    <property type="entry name" value="Mitochondrial import inner membrane translocase subunit tim13 like domains"/>
    <property type="match status" value="1"/>
</dbReference>
<dbReference type="InterPro" id="IPR004217">
    <property type="entry name" value="Tim10-like"/>
</dbReference>
<dbReference type="InterPro" id="IPR035427">
    <property type="entry name" value="Tim10-like_dom_sf"/>
</dbReference>
<dbReference type="PANTHER" id="PTHR11038">
    <property type="entry name" value="MITOCHONDRIAL IMPORT INNER MEMBRANE TRANSLOCASE SUBUNIT TIM10"/>
    <property type="match status" value="1"/>
</dbReference>
<dbReference type="PANTHER" id="PTHR11038:SF16">
    <property type="entry name" value="MITOCHONDRIAL IMPORT INNER MEMBRANE TRANSLOCASE SUBUNIT TIM10"/>
    <property type="match status" value="1"/>
</dbReference>
<dbReference type="Pfam" id="PF02953">
    <property type="entry name" value="zf-Tim10_DDP"/>
    <property type="match status" value="1"/>
</dbReference>
<dbReference type="SUPFAM" id="SSF144122">
    <property type="entry name" value="Tim10-like"/>
    <property type="match status" value="1"/>
</dbReference>
<keyword id="KW-0143">Chaperone</keyword>
<keyword id="KW-1015">Disulfide bond</keyword>
<keyword id="KW-0472">Membrane</keyword>
<keyword id="KW-0479">Metal-binding</keyword>
<keyword id="KW-0496">Mitochondrion</keyword>
<keyword id="KW-0999">Mitochondrion inner membrane</keyword>
<keyword id="KW-0653">Protein transport</keyword>
<keyword id="KW-1185">Reference proteome</keyword>
<keyword id="KW-0811">Translocation</keyword>
<keyword id="KW-0813">Transport</keyword>
<keyword id="KW-0862">Zinc</keyword>
<gene>
    <name type="primary">Tim10</name>
    <name type="ORF">CG9878</name>
</gene>
<sequence>MALPQISTADQAKLQLMQEMEIEMMSDLYNRMTNACHKKCIPPRYSESELGKGEMVCIDRCVAKYLDIHEKIGKKLTAMSMQDEELMKKMSS</sequence>
<evidence type="ECO:0000250" key="1"/>
<evidence type="ECO:0000305" key="2"/>
<accession>Q9W2D6</accession>
<accession>B7YZS2</accession>
<accession>Q0E8Z5</accession>
<accession>Q9Y0V7</accession>
<proteinExistence type="inferred from homology"/>
<protein>
    <recommendedName>
        <fullName>Mitochondrial import inner membrane translocase subunit Tim10</fullName>
    </recommendedName>
</protein>
<comment type="function">
    <text evidence="1">Mitochondrial intermembrane chaperone that participates in the import and insertion of multi-pass transmembrane proteins into the mitochondrial inner membrane. May also be required for the transfer of beta-barrel precursors from the TOM complex to the sorting and assembly machinery (SAM complex) of the outer membrane. Acts as a chaperone-like protein that protects the hydrophobic precursors from aggregation and guide them through the mitochondrial intermembrane space (By similarity).</text>
</comment>
<comment type="subunit">
    <text evidence="1">Heterohexamer; composed of 3 copies of Tim9 and 3 copies of Tim10, named soluble 70 kDa complex. The complex associates with the Tim22 component of the TIM22 complex. Interacts with multi-pass transmembrane proteins in transit (By similarity).</text>
</comment>
<comment type="subcellular location">
    <subcellularLocation>
        <location evidence="1">Mitochondrion inner membrane</location>
        <topology evidence="1">Peripheral membrane protein</topology>
        <orientation evidence="1">Intermembrane side</orientation>
    </subcellularLocation>
</comment>
<comment type="domain">
    <text evidence="1">The twin CX3C motif contains 4 conserved Cys residues that form 2 disulfide bonds in the mitochondrial intermembrane space. However, during the transit of Tim10 from cytoplasm into mitochondrion, the Cys residues probably coordinate zinc, thereby preventing folding and allowing its transfer across mitochondrial outer membrane (By similarity).</text>
</comment>
<comment type="similarity">
    <text evidence="2">Belongs to the small Tim family.</text>
</comment>